<evidence type="ECO:0000255" key="1">
    <source>
        <dbReference type="HAMAP-Rule" id="MF_00504"/>
    </source>
</evidence>
<proteinExistence type="inferred from homology"/>
<organism>
    <name type="scientific">Vibrio parahaemolyticus serotype O3:K6 (strain RIMD 2210633)</name>
    <dbReference type="NCBI Taxonomy" id="223926"/>
    <lineage>
        <taxon>Bacteria</taxon>
        <taxon>Pseudomonadati</taxon>
        <taxon>Pseudomonadota</taxon>
        <taxon>Gammaproteobacteria</taxon>
        <taxon>Vibrionales</taxon>
        <taxon>Vibrionaceae</taxon>
        <taxon>Vibrio</taxon>
    </lineage>
</organism>
<gene>
    <name evidence="1" type="primary">pepB</name>
    <name type="ordered locus">VP0603</name>
</gene>
<dbReference type="EC" id="3.4.11.23" evidence="1"/>
<dbReference type="EMBL" id="BA000031">
    <property type="protein sequence ID" value="BAC58866.1"/>
    <property type="molecule type" value="Genomic_DNA"/>
</dbReference>
<dbReference type="RefSeq" id="NP_796982.1">
    <property type="nucleotide sequence ID" value="NC_004603.1"/>
</dbReference>
<dbReference type="RefSeq" id="WP_005460223.1">
    <property type="nucleotide sequence ID" value="NC_004603.1"/>
</dbReference>
<dbReference type="SMR" id="Q87S21"/>
<dbReference type="MEROPS" id="M17.004"/>
<dbReference type="GeneID" id="1188078"/>
<dbReference type="KEGG" id="vpa:VP0603"/>
<dbReference type="PATRIC" id="fig|223926.6.peg.572"/>
<dbReference type="eggNOG" id="COG0260">
    <property type="taxonomic scope" value="Bacteria"/>
</dbReference>
<dbReference type="HOGENOM" id="CLU_013734_7_1_6"/>
<dbReference type="Proteomes" id="UP000002493">
    <property type="component" value="Chromosome 1"/>
</dbReference>
<dbReference type="GO" id="GO:0005737">
    <property type="term" value="C:cytoplasm"/>
    <property type="evidence" value="ECO:0007669"/>
    <property type="project" value="UniProtKB-SubCell"/>
</dbReference>
<dbReference type="GO" id="GO:0030145">
    <property type="term" value="F:manganese ion binding"/>
    <property type="evidence" value="ECO:0007669"/>
    <property type="project" value="UniProtKB-UniRule"/>
</dbReference>
<dbReference type="GO" id="GO:0070006">
    <property type="term" value="F:metalloaminopeptidase activity"/>
    <property type="evidence" value="ECO:0007669"/>
    <property type="project" value="InterPro"/>
</dbReference>
<dbReference type="GO" id="GO:0006508">
    <property type="term" value="P:proteolysis"/>
    <property type="evidence" value="ECO:0007669"/>
    <property type="project" value="UniProtKB-UniRule"/>
</dbReference>
<dbReference type="CDD" id="cd00433">
    <property type="entry name" value="Peptidase_M17"/>
    <property type="match status" value="1"/>
</dbReference>
<dbReference type="FunFam" id="3.40.630.10:FF:000037">
    <property type="entry name" value="Peptidase B"/>
    <property type="match status" value="1"/>
</dbReference>
<dbReference type="Gene3D" id="3.40.630.10">
    <property type="entry name" value="Zn peptidases"/>
    <property type="match status" value="1"/>
</dbReference>
<dbReference type="HAMAP" id="MF_00504">
    <property type="entry name" value="Aminopeptidase_M17"/>
    <property type="match status" value="1"/>
</dbReference>
<dbReference type="InterPro" id="IPR011356">
    <property type="entry name" value="Leucine_aapep/pepB"/>
</dbReference>
<dbReference type="InterPro" id="IPR047620">
    <property type="entry name" value="M17_PepB-like_N"/>
</dbReference>
<dbReference type="InterPro" id="IPR008330">
    <property type="entry name" value="Pept_M17_PepB"/>
</dbReference>
<dbReference type="InterPro" id="IPR000819">
    <property type="entry name" value="Peptidase_M17_C"/>
</dbReference>
<dbReference type="NCBIfam" id="NF003450">
    <property type="entry name" value="PRK05015.1"/>
    <property type="match status" value="1"/>
</dbReference>
<dbReference type="PANTHER" id="PTHR11963">
    <property type="entry name" value="LEUCINE AMINOPEPTIDASE-RELATED"/>
    <property type="match status" value="1"/>
</dbReference>
<dbReference type="PANTHER" id="PTHR11963:SF20">
    <property type="entry name" value="PEPTIDASE B"/>
    <property type="match status" value="1"/>
</dbReference>
<dbReference type="Pfam" id="PF12404">
    <property type="entry name" value="DUF3663"/>
    <property type="match status" value="1"/>
</dbReference>
<dbReference type="Pfam" id="PF00883">
    <property type="entry name" value="Peptidase_M17"/>
    <property type="match status" value="1"/>
</dbReference>
<dbReference type="PIRSF" id="PIRSF036388">
    <property type="entry name" value="Ctsl_amnpptdse_B"/>
    <property type="match status" value="1"/>
</dbReference>
<dbReference type="PRINTS" id="PR00481">
    <property type="entry name" value="LAMNOPPTDASE"/>
</dbReference>
<dbReference type="SUPFAM" id="SSF53187">
    <property type="entry name" value="Zn-dependent exopeptidases"/>
    <property type="match status" value="1"/>
</dbReference>
<dbReference type="PROSITE" id="PS00631">
    <property type="entry name" value="CYTOSOL_AP"/>
    <property type="match status" value="1"/>
</dbReference>
<feature type="chain" id="PRO_0000165848" description="Peptidase B">
    <location>
        <begin position="1"/>
        <end position="432"/>
    </location>
</feature>
<feature type="active site" evidence="1">
    <location>
        <position position="208"/>
    </location>
</feature>
<feature type="active site" evidence="1">
    <location>
        <position position="282"/>
    </location>
</feature>
<feature type="binding site" evidence="1">
    <location>
        <position position="196"/>
    </location>
    <ligand>
        <name>Mn(2+)</name>
        <dbReference type="ChEBI" id="CHEBI:29035"/>
        <label>2</label>
    </ligand>
</feature>
<feature type="binding site" evidence="1">
    <location>
        <position position="201"/>
    </location>
    <ligand>
        <name>Mn(2+)</name>
        <dbReference type="ChEBI" id="CHEBI:29035"/>
        <label>1</label>
    </ligand>
</feature>
<feature type="binding site" evidence="1">
    <location>
        <position position="201"/>
    </location>
    <ligand>
        <name>Mn(2+)</name>
        <dbReference type="ChEBI" id="CHEBI:29035"/>
        <label>2</label>
    </ligand>
</feature>
<feature type="binding site" evidence="1">
    <location>
        <position position="219"/>
    </location>
    <ligand>
        <name>Mn(2+)</name>
        <dbReference type="ChEBI" id="CHEBI:29035"/>
        <label>2</label>
    </ligand>
</feature>
<feature type="binding site" evidence="1">
    <location>
        <position position="278"/>
    </location>
    <ligand>
        <name>Mn(2+)</name>
        <dbReference type="ChEBI" id="CHEBI:29035"/>
        <label>1</label>
    </ligand>
</feature>
<feature type="binding site" evidence="1">
    <location>
        <position position="280"/>
    </location>
    <ligand>
        <name>Mn(2+)</name>
        <dbReference type="ChEBI" id="CHEBI:29035"/>
        <label>1</label>
    </ligand>
</feature>
<feature type="binding site" evidence="1">
    <location>
        <position position="280"/>
    </location>
    <ligand>
        <name>Mn(2+)</name>
        <dbReference type="ChEBI" id="CHEBI:29035"/>
        <label>2</label>
    </ligand>
</feature>
<protein>
    <recommendedName>
        <fullName evidence="1">Peptidase B</fullName>
        <ecNumber evidence="1">3.4.11.23</ecNumber>
    </recommendedName>
    <alternativeName>
        <fullName evidence="1">Aminopeptidase B</fullName>
    </alternativeName>
</protein>
<keyword id="KW-0031">Aminopeptidase</keyword>
<keyword id="KW-0963">Cytoplasm</keyword>
<keyword id="KW-0378">Hydrolase</keyword>
<keyword id="KW-0464">Manganese</keyword>
<keyword id="KW-0479">Metal-binding</keyword>
<keyword id="KW-0645">Protease</keyword>
<sequence>MSTQMSVFLSQDSAAPHWGEKALLSFSETGATIHLGEGHDLGAIQRAARQLDGQGIHSVLLSGEHWDLESIWAFHQGYRNPKKHGLLEWTALSEEDQTELQARIKATDFTRDIINKTAEEVAPRQLATMAAEFIKSVAPEGTVTARIVKDKDLLAEGWEGIYAVGRGSDRTSAMLQLDYNPTGDENAPVFACLVGKGITFDSGGYSLKPSNFMSAMKADMGGSGTITGGLGLAILRGLNKRVKLILCCAENMVSGRALKLGDIITYKNGKTVEIMNTDAEGRLVLADGLIYASEHNPELIIDCATLTGAAKNALGNDYHALMSFDDELSHQALTAANKEKEGLWPLPLADFHRGMLPSNFADLSNISSGDYSPGASTAAAFLSYFVEDYKKGWLHFDCAGTYRKSASDKWAAGATGMGVRTLARLLNEQAEK</sequence>
<reference key="1">
    <citation type="journal article" date="2003" name="Lancet">
        <title>Genome sequence of Vibrio parahaemolyticus: a pathogenic mechanism distinct from that of V. cholerae.</title>
        <authorList>
            <person name="Makino K."/>
            <person name="Oshima K."/>
            <person name="Kurokawa K."/>
            <person name="Yokoyama K."/>
            <person name="Uda T."/>
            <person name="Tagomori K."/>
            <person name="Iijima Y."/>
            <person name="Najima M."/>
            <person name="Nakano M."/>
            <person name="Yamashita A."/>
            <person name="Kubota Y."/>
            <person name="Kimura S."/>
            <person name="Yasunaga T."/>
            <person name="Honda T."/>
            <person name="Shinagawa H."/>
            <person name="Hattori M."/>
            <person name="Iida T."/>
        </authorList>
    </citation>
    <scope>NUCLEOTIDE SEQUENCE [LARGE SCALE GENOMIC DNA]</scope>
    <source>
        <strain>RIMD 2210633</strain>
    </source>
</reference>
<accession>Q87S21</accession>
<comment type="function">
    <text evidence="1">Probably plays an important role in intracellular peptide degradation.</text>
</comment>
<comment type="catalytic activity">
    <reaction evidence="1">
        <text>Release of an N-terminal amino acid, Xaa, from a peptide or arylamide. Xaa is preferably Glu or Asp but may be other amino acids, including Leu, Met, His, Cys and Gln.</text>
        <dbReference type="EC" id="3.4.11.23"/>
    </reaction>
</comment>
<comment type="cofactor">
    <cofactor evidence="1">
        <name>Mn(2+)</name>
        <dbReference type="ChEBI" id="CHEBI:29035"/>
    </cofactor>
    <text evidence="1">Binds 2 manganese ions per subunit.</text>
</comment>
<comment type="subunit">
    <text evidence="1">Homohexamer.</text>
</comment>
<comment type="subcellular location">
    <subcellularLocation>
        <location evidence="1">Cytoplasm</location>
    </subcellularLocation>
</comment>
<comment type="similarity">
    <text evidence="1">Belongs to the peptidase M17 family.</text>
</comment>
<name>PEPB_VIBPA</name>